<proteinExistence type="inferred from homology"/>
<feature type="chain" id="PRO_1000211962" description="Small ribosomal subunit protein eS24">
    <location>
        <begin position="1"/>
        <end position="120"/>
    </location>
</feature>
<feature type="region of interest" description="Disordered" evidence="2">
    <location>
        <begin position="101"/>
        <end position="120"/>
    </location>
</feature>
<accession>C3MWX0</accession>
<evidence type="ECO:0000255" key="1">
    <source>
        <dbReference type="HAMAP-Rule" id="MF_00545"/>
    </source>
</evidence>
<evidence type="ECO:0000256" key="2">
    <source>
        <dbReference type="SAM" id="MobiDB-lite"/>
    </source>
</evidence>
<evidence type="ECO:0000305" key="3"/>
<protein>
    <recommendedName>
        <fullName evidence="1">Small ribosomal subunit protein eS24</fullName>
    </recommendedName>
    <alternativeName>
        <fullName evidence="3">30S ribosomal protein S24e</fullName>
    </alternativeName>
</protein>
<gene>
    <name evidence="1" type="primary">rps24e</name>
    <name type="ordered locus">M1425_1671</name>
</gene>
<sequence>MESQAKVKISDKAEGIIERDVQNAVIGRREISLKVYHMGSGTPSRKDIIKAIIQAFASQENLVVVRKISTSYGAGISNVKLHIYKSREILEKIEPKYLLDRDAGTKQKKGGSKGGQGAKG</sequence>
<dbReference type="EMBL" id="CP001400">
    <property type="protein sequence ID" value="ACP38420.1"/>
    <property type="molecule type" value="Genomic_DNA"/>
</dbReference>
<dbReference type="RefSeq" id="WP_012711651.1">
    <property type="nucleotide sequence ID" value="NC_012588.1"/>
</dbReference>
<dbReference type="SMR" id="C3MWX0"/>
<dbReference type="KEGG" id="sia:M1425_1671"/>
<dbReference type="HOGENOM" id="CLU_107248_3_2_2"/>
<dbReference type="Proteomes" id="UP000001350">
    <property type="component" value="Chromosome"/>
</dbReference>
<dbReference type="GO" id="GO:1990904">
    <property type="term" value="C:ribonucleoprotein complex"/>
    <property type="evidence" value="ECO:0007669"/>
    <property type="project" value="UniProtKB-KW"/>
</dbReference>
<dbReference type="GO" id="GO:0005840">
    <property type="term" value="C:ribosome"/>
    <property type="evidence" value="ECO:0007669"/>
    <property type="project" value="UniProtKB-KW"/>
</dbReference>
<dbReference type="GO" id="GO:0003735">
    <property type="term" value="F:structural constituent of ribosome"/>
    <property type="evidence" value="ECO:0007669"/>
    <property type="project" value="InterPro"/>
</dbReference>
<dbReference type="GO" id="GO:0006412">
    <property type="term" value="P:translation"/>
    <property type="evidence" value="ECO:0007669"/>
    <property type="project" value="UniProtKB-UniRule"/>
</dbReference>
<dbReference type="Gene3D" id="3.30.70.3370">
    <property type="match status" value="1"/>
</dbReference>
<dbReference type="HAMAP" id="MF_00545">
    <property type="entry name" value="Ribosomal_eS24"/>
    <property type="match status" value="1"/>
</dbReference>
<dbReference type="InterPro" id="IPR053709">
    <property type="entry name" value="eRP_eS24_sf"/>
</dbReference>
<dbReference type="InterPro" id="IPR001976">
    <property type="entry name" value="Ribosomal_eS24"/>
</dbReference>
<dbReference type="InterPro" id="IPR018098">
    <property type="entry name" value="Ribosomal_eS24_CS"/>
</dbReference>
<dbReference type="InterPro" id="IPR012678">
    <property type="entry name" value="Ribosomal_uL23/eL15/eS24_sf"/>
</dbReference>
<dbReference type="PANTHER" id="PTHR10496">
    <property type="entry name" value="40S RIBOSOMAL PROTEIN S24"/>
    <property type="match status" value="1"/>
</dbReference>
<dbReference type="Pfam" id="PF01282">
    <property type="entry name" value="Ribosomal_S24e"/>
    <property type="match status" value="1"/>
</dbReference>
<dbReference type="SUPFAM" id="SSF54189">
    <property type="entry name" value="Ribosomal proteins S24e, L23 and L15e"/>
    <property type="match status" value="1"/>
</dbReference>
<dbReference type="PROSITE" id="PS00529">
    <property type="entry name" value="RIBOSOMAL_S24E"/>
    <property type="match status" value="1"/>
</dbReference>
<organism>
    <name type="scientific">Saccharolobus islandicus (strain M.14.25 / Kamchatka #1)</name>
    <name type="common">Sulfolobus islandicus</name>
    <dbReference type="NCBI Taxonomy" id="427317"/>
    <lineage>
        <taxon>Archaea</taxon>
        <taxon>Thermoproteota</taxon>
        <taxon>Thermoprotei</taxon>
        <taxon>Sulfolobales</taxon>
        <taxon>Sulfolobaceae</taxon>
        <taxon>Saccharolobus</taxon>
    </lineage>
</organism>
<name>RS24_SACI4</name>
<keyword id="KW-0687">Ribonucleoprotein</keyword>
<keyword id="KW-0689">Ribosomal protein</keyword>
<reference key="1">
    <citation type="journal article" date="2009" name="Proc. Natl. Acad. Sci. U.S.A.">
        <title>Biogeography of the Sulfolobus islandicus pan-genome.</title>
        <authorList>
            <person name="Reno M.L."/>
            <person name="Held N.L."/>
            <person name="Fields C.J."/>
            <person name="Burke P.V."/>
            <person name="Whitaker R.J."/>
        </authorList>
    </citation>
    <scope>NUCLEOTIDE SEQUENCE [LARGE SCALE GENOMIC DNA]</scope>
    <source>
        <strain>M.14.25 / Kamchatka #1</strain>
    </source>
</reference>
<comment type="similarity">
    <text evidence="1">Belongs to the eukaryotic ribosomal protein eS24 family.</text>
</comment>